<accession>Q47038</accession>
<accession>Q47039</accession>
<accession>Q47040</accession>
<dbReference type="EMBL" id="X76688">
    <property type="protein sequence ID" value="CAA54118.1"/>
    <property type="molecule type" value="Genomic_DNA"/>
</dbReference>
<dbReference type="EMBL" id="X76688">
    <property type="protein sequence ID" value="CAA54119.1"/>
    <property type="status" value="ALT_INIT"/>
    <property type="molecule type" value="Genomic_DNA"/>
</dbReference>
<dbReference type="EMBL" id="X76688">
    <property type="protein sequence ID" value="CAA54120.1"/>
    <property type="status" value="ALT_INIT"/>
    <property type="molecule type" value="Genomic_DNA"/>
</dbReference>
<dbReference type="PIR" id="G55545">
    <property type="entry name" value="G55545"/>
</dbReference>
<dbReference type="PDB" id="2AXW">
    <property type="method" value="X-ray"/>
    <property type="resolution" value="1.05 A"/>
    <property type="chains" value="A/B=27-147"/>
</dbReference>
<dbReference type="PDB" id="2FVN">
    <property type="method" value="NMR"/>
    <property type="chains" value="A=27-147"/>
</dbReference>
<dbReference type="PDB" id="2IXQ">
    <property type="method" value="NMR"/>
    <property type="chains" value="A=27-147"/>
</dbReference>
<dbReference type="PDBsum" id="2AXW"/>
<dbReference type="PDBsum" id="2FVN"/>
<dbReference type="PDBsum" id="2IXQ"/>
<dbReference type="BMRB" id="Q47038"/>
<dbReference type="SMR" id="Q47038"/>
<dbReference type="EvolutionaryTrace" id="Q47038"/>
<dbReference type="CDD" id="cd18776">
    <property type="entry name" value="AfaD-like"/>
    <property type="match status" value="1"/>
</dbReference>
<dbReference type="Gene3D" id="2.60.40.1570">
    <property type="entry name" value="Dr adhesin"/>
    <property type="match status" value="1"/>
</dbReference>
<dbReference type="InterPro" id="IPR008966">
    <property type="entry name" value="Adhesion_dom_sf"/>
</dbReference>
<dbReference type="InterPro" id="IPR008394">
    <property type="entry name" value="AfaD"/>
</dbReference>
<dbReference type="InterPro" id="IPR037028">
    <property type="entry name" value="Dr_adhesin_sf"/>
</dbReference>
<dbReference type="Pfam" id="PF05775">
    <property type="entry name" value="AfaD"/>
    <property type="match status" value="1"/>
</dbReference>
<dbReference type="SUPFAM" id="SSF49401">
    <property type="entry name" value="Bacterial adhesins"/>
    <property type="match status" value="1"/>
</dbReference>
<evidence type="ECO:0000255" key="1"/>
<evidence type="ECO:0000256" key="2">
    <source>
        <dbReference type="SAM" id="MobiDB-lite"/>
    </source>
</evidence>
<evidence type="ECO:0000305" key="3"/>
<evidence type="ECO:0007829" key="4">
    <source>
        <dbReference type="PDB" id="2AXW"/>
    </source>
</evidence>
<evidence type="ECO:0007829" key="5">
    <source>
        <dbReference type="PDB" id="2FVN"/>
    </source>
</evidence>
<feature type="signal peptide" evidence="1">
    <location>
        <begin position="1"/>
        <end position="26"/>
    </location>
</feature>
<feature type="chain" id="PRO_0000020636" description="Protein AfaD">
    <location>
        <begin position="27"/>
        <end position="147"/>
    </location>
</feature>
<feature type="region of interest" description="Disordered" evidence="2">
    <location>
        <begin position="91"/>
        <end position="111"/>
    </location>
</feature>
<feature type="strand" evidence="4">
    <location>
        <begin position="28"/>
        <end position="33"/>
    </location>
</feature>
<feature type="strand" evidence="4">
    <location>
        <begin position="46"/>
        <end position="53"/>
    </location>
</feature>
<feature type="strand" evidence="4">
    <location>
        <begin position="59"/>
        <end position="69"/>
    </location>
</feature>
<feature type="strand" evidence="4">
    <location>
        <begin position="74"/>
        <end position="81"/>
    </location>
</feature>
<feature type="strand" evidence="5">
    <location>
        <begin position="82"/>
        <end position="85"/>
    </location>
</feature>
<feature type="strand" evidence="4">
    <location>
        <begin position="87"/>
        <end position="93"/>
    </location>
</feature>
<feature type="strand" evidence="5">
    <location>
        <begin position="103"/>
        <end position="105"/>
    </location>
</feature>
<feature type="strand" evidence="4">
    <location>
        <begin position="107"/>
        <end position="111"/>
    </location>
</feature>
<feature type="strand" evidence="4">
    <location>
        <begin position="114"/>
        <end position="127"/>
    </location>
</feature>
<feature type="strand" evidence="4">
    <location>
        <begin position="131"/>
        <end position="147"/>
    </location>
</feature>
<reference key="1">
    <citation type="journal article" date="1994" name="J. Bacteriol.">
        <title>Nucleotide sequence of the afimbrial-adhesin-encoding afa-3 gene cluster and its translocation via flanking IS1 insertion sequences.</title>
        <authorList>
            <person name="Garcia M.-I."/>
            <person name="Labigne A."/>
            <person name="le Bouguenec C.L."/>
        </authorList>
    </citation>
    <scope>NUCLEOTIDE SEQUENCE [GENOMIC DNA]</scope>
    <source>
        <strain>A30 / UPEC</strain>
    </source>
</reference>
<organism>
    <name type="scientific">Escherichia coli</name>
    <dbReference type="NCBI Taxonomy" id="562"/>
    <lineage>
        <taxon>Bacteria</taxon>
        <taxon>Pseudomonadati</taxon>
        <taxon>Pseudomonadota</taxon>
        <taxon>Gammaproteobacteria</taxon>
        <taxon>Enterobacterales</taxon>
        <taxon>Enterobacteriaceae</taxon>
        <taxon>Escherichia</taxon>
    </lineage>
</organism>
<name>AFAD_ECOLX</name>
<sequence>MNGSIRKMMRVTCGMLLMVMSGVSQAAELHLESRGGSGTQLRDGAKVATGRIICREAHTGFHVWMNERQVDGRAERYVVQSKDGRHELRVRTGGDGWSPVKGEGGKGVSRPGQEEQVFFDVMADGNQDIAPGEYRFSVGGACVVPQE</sequence>
<comment type="similarity">
    <text evidence="3">To E.coli AggB.</text>
</comment>
<comment type="caution">
    <text evidence="3">It is uncertain whether Met-1, Met-8 or Met-9 is the initiator.</text>
</comment>
<comment type="sequence caution" evidence="3">
    <conflict type="erroneous initiation">
        <sequence resource="EMBL-CDS" id="CAA54119"/>
    </conflict>
</comment>
<comment type="sequence caution" evidence="3">
    <conflict type="erroneous initiation">
        <sequence resource="EMBL-CDS" id="CAA54120"/>
    </conflict>
</comment>
<proteinExistence type="evidence at protein level"/>
<keyword id="KW-0002">3D-structure</keyword>
<keyword id="KW-0614">Plasmid</keyword>
<keyword id="KW-0732">Signal</keyword>
<gene>
    <name type="primary">afaD</name>
</gene>
<protein>
    <recommendedName>
        <fullName>Protein AfaD</fullName>
    </recommendedName>
</protein>
<geneLocation type="plasmid">
    <name>pIL1055</name>
</geneLocation>